<keyword id="KW-0007">Acetylation</keyword>
<keyword id="KW-0025">Alternative splicing</keyword>
<keyword id="KW-0175">Coiled coil</keyword>
<keyword id="KW-0963">Cytoplasm</keyword>
<keyword id="KW-0206">Cytoskeleton</keyword>
<keyword id="KW-0597">Phosphoprotein</keyword>
<keyword id="KW-1185">Reference proteome</keyword>
<gene>
    <name type="primary">Smtn</name>
    <name type="synonym">Smsmo</name>
</gene>
<dbReference type="EMBL" id="AF218834">
    <property type="protein sequence ID" value="AAD29628.2"/>
    <property type="molecule type" value="Genomic_DNA"/>
</dbReference>
<dbReference type="EMBL" id="AF116517">
    <property type="protein sequence ID" value="AAD29628.2"/>
    <property type="status" value="JOINED"/>
    <property type="molecule type" value="Genomic_DNA"/>
</dbReference>
<dbReference type="EMBL" id="AF116518">
    <property type="protein sequence ID" value="AAD29628.2"/>
    <property type="status" value="JOINED"/>
    <property type="molecule type" value="Genomic_DNA"/>
</dbReference>
<dbReference type="EMBL" id="AF195524">
    <property type="protein sequence ID" value="AAD29628.2"/>
    <property type="status" value="JOINED"/>
    <property type="molecule type" value="Genomic_DNA"/>
</dbReference>
<dbReference type="EMBL" id="AF195525">
    <property type="protein sequence ID" value="AAD29628.2"/>
    <property type="status" value="JOINED"/>
    <property type="molecule type" value="Genomic_DNA"/>
</dbReference>
<dbReference type="EMBL" id="AF218829">
    <property type="protein sequence ID" value="AAD29628.2"/>
    <property type="status" value="JOINED"/>
    <property type="molecule type" value="Genomic_DNA"/>
</dbReference>
<dbReference type="EMBL" id="AF218830">
    <property type="protein sequence ID" value="AAD29628.2"/>
    <property type="status" value="JOINED"/>
    <property type="molecule type" value="Genomic_DNA"/>
</dbReference>
<dbReference type="EMBL" id="AF218831">
    <property type="protein sequence ID" value="AAD29628.2"/>
    <property type="status" value="JOINED"/>
    <property type="molecule type" value="Genomic_DNA"/>
</dbReference>
<dbReference type="EMBL" id="AF218832">
    <property type="protein sequence ID" value="AAD29628.2"/>
    <property type="status" value="JOINED"/>
    <property type="molecule type" value="Genomic_DNA"/>
</dbReference>
<dbReference type="EMBL" id="AF218833">
    <property type="protein sequence ID" value="AAD29628.2"/>
    <property type="status" value="JOINED"/>
    <property type="molecule type" value="Genomic_DNA"/>
</dbReference>
<dbReference type="EMBL" id="AF218834">
    <property type="protein sequence ID" value="AAF67392.1"/>
    <property type="molecule type" value="Genomic_DNA"/>
</dbReference>
<dbReference type="EMBL" id="AF116518">
    <property type="protein sequence ID" value="AAF67392.1"/>
    <property type="status" value="JOINED"/>
    <property type="molecule type" value="Genomic_DNA"/>
</dbReference>
<dbReference type="EMBL" id="AF195525">
    <property type="protein sequence ID" value="AAF67392.1"/>
    <property type="status" value="JOINED"/>
    <property type="molecule type" value="Genomic_DNA"/>
</dbReference>
<dbReference type="EMBL" id="AF218830">
    <property type="protein sequence ID" value="AAF67392.1"/>
    <property type="status" value="JOINED"/>
    <property type="molecule type" value="Genomic_DNA"/>
</dbReference>
<dbReference type="EMBL" id="AF218831">
    <property type="protein sequence ID" value="AAF67392.1"/>
    <property type="status" value="JOINED"/>
    <property type="molecule type" value="Genomic_DNA"/>
</dbReference>
<dbReference type="EMBL" id="AF218832">
    <property type="protein sequence ID" value="AAF67392.1"/>
    <property type="status" value="JOINED"/>
    <property type="molecule type" value="Genomic_DNA"/>
</dbReference>
<dbReference type="EMBL" id="AF218833">
    <property type="protein sequence ID" value="AAF67392.1"/>
    <property type="status" value="JOINED"/>
    <property type="molecule type" value="Genomic_DNA"/>
</dbReference>
<dbReference type="EMBL" id="AF064236">
    <property type="protein sequence ID" value="AAF01480.1"/>
    <property type="molecule type" value="mRNA"/>
</dbReference>
<dbReference type="EMBL" id="AJ010305">
    <property type="protein sequence ID" value="CAA09076.1"/>
    <property type="molecule type" value="mRNA"/>
</dbReference>
<dbReference type="EMBL" id="AF132449">
    <property type="protein sequence ID" value="AAF25577.2"/>
    <property type="molecule type" value="Genomic_DNA"/>
</dbReference>
<dbReference type="EMBL" id="AF132449">
    <property type="protein sequence ID" value="AAF25578.2"/>
    <property type="molecule type" value="Genomic_DNA"/>
</dbReference>
<dbReference type="EMBL" id="AF132449">
    <property type="protein sequence ID" value="AAF25579.2"/>
    <property type="molecule type" value="Genomic_DNA"/>
</dbReference>
<dbReference type="EMBL" id="AF132449">
    <property type="protein sequence ID" value="AAF25580.2"/>
    <property type="molecule type" value="Genomic_DNA"/>
</dbReference>
<dbReference type="EMBL" id="AK030932">
    <property type="protein sequence ID" value="BAC27188.1"/>
    <property type="molecule type" value="mRNA"/>
</dbReference>
<dbReference type="EMBL" id="AK170516">
    <property type="protein sequence ID" value="BAE41853.1"/>
    <property type="molecule type" value="mRNA"/>
</dbReference>
<dbReference type="EMBL" id="BC010599">
    <property type="protein sequence ID" value="AAH10599.1"/>
    <property type="molecule type" value="mRNA"/>
</dbReference>
<dbReference type="EMBL" id="BC066192">
    <property type="protein sequence ID" value="AAH66192.1"/>
    <property type="molecule type" value="mRNA"/>
</dbReference>
<dbReference type="EMBL" id="BC069836">
    <property type="protein sequence ID" value="AAH69836.1"/>
    <property type="molecule type" value="mRNA"/>
</dbReference>
<dbReference type="EMBL" id="BC069839">
    <property type="protein sequence ID" value="AAH69839.1"/>
    <property type="molecule type" value="mRNA"/>
</dbReference>
<dbReference type="CCDS" id="CCDS24366.1">
    <molecule id="Q921U8-2"/>
</dbReference>
<dbReference type="CCDS" id="CCDS70129.1">
    <molecule id="Q921U8-1"/>
</dbReference>
<dbReference type="RefSeq" id="NP_001152756.1">
    <molecule id="Q921U8-2"/>
    <property type="nucleotide sequence ID" value="NM_001159284.2"/>
</dbReference>
<dbReference type="RefSeq" id="NP_001271356.1">
    <molecule id="Q921U8-1"/>
    <property type="nucleotide sequence ID" value="NM_001284427.2"/>
</dbReference>
<dbReference type="RefSeq" id="NP_001271357.1">
    <molecule id="Q921U8-2"/>
    <property type="nucleotide sequence ID" value="NM_001284428.2"/>
</dbReference>
<dbReference type="RefSeq" id="NP_001271358.1">
    <property type="nucleotide sequence ID" value="NM_001284429.1"/>
</dbReference>
<dbReference type="RefSeq" id="NP_001412430.1">
    <molecule id="Q921U8-2"/>
    <property type="nucleotide sequence ID" value="NM_001425501.1"/>
</dbReference>
<dbReference type="RefSeq" id="NP_001412432.1">
    <molecule id="Q921U8-4"/>
    <property type="nucleotide sequence ID" value="NM_001425503.1"/>
</dbReference>
<dbReference type="RefSeq" id="NP_038898.2">
    <molecule id="Q921U8-2"/>
    <property type="nucleotide sequence ID" value="NM_013870.4"/>
</dbReference>
<dbReference type="RefSeq" id="XP_017170075.1">
    <molecule id="Q921U8-1"/>
    <property type="nucleotide sequence ID" value="XM_017314586.3"/>
</dbReference>
<dbReference type="SMR" id="Q921U8"/>
<dbReference type="BioGRID" id="205923">
    <property type="interactions" value="5"/>
</dbReference>
<dbReference type="FunCoup" id="Q921U8">
    <property type="interactions" value="156"/>
</dbReference>
<dbReference type="IntAct" id="Q921U8">
    <property type="interactions" value="2"/>
</dbReference>
<dbReference type="STRING" id="10090.ENSMUSP00000074621"/>
<dbReference type="GlyGen" id="Q921U8">
    <property type="glycosylation" value="6 sites, 1 N-linked glycan (1 site), 1 O-linked glycan (2 sites)"/>
</dbReference>
<dbReference type="iPTMnet" id="Q921U8"/>
<dbReference type="PhosphoSitePlus" id="Q921U8"/>
<dbReference type="PaxDb" id="10090-ENSMUSP00000020721"/>
<dbReference type="PeptideAtlas" id="Q921U8"/>
<dbReference type="ProteomicsDB" id="261378">
    <molecule id="Q921U8-1"/>
</dbReference>
<dbReference type="ProteomicsDB" id="261379">
    <molecule id="Q921U8-2"/>
</dbReference>
<dbReference type="ProteomicsDB" id="261380">
    <molecule id="Q921U8-3"/>
</dbReference>
<dbReference type="ProteomicsDB" id="261381">
    <molecule id="Q921U8-4"/>
</dbReference>
<dbReference type="Pumba" id="Q921U8"/>
<dbReference type="Antibodypedia" id="3445">
    <property type="antibodies" value="184 antibodies from 26 providers"/>
</dbReference>
<dbReference type="DNASU" id="29856"/>
<dbReference type="Ensembl" id="ENSMUST00000020721.15">
    <molecule id="Q921U8-2"/>
    <property type="protein sequence ID" value="ENSMUSP00000020721.9"/>
    <property type="gene ID" value="ENSMUSG00000020439.19"/>
</dbReference>
<dbReference type="Ensembl" id="ENSMUST00000075118.10">
    <molecule id="Q921U8-1"/>
    <property type="protein sequence ID" value="ENSMUSP00000074621.4"/>
    <property type="gene ID" value="ENSMUSG00000020439.19"/>
</dbReference>
<dbReference type="Ensembl" id="ENSMUST00000170588.8">
    <molecule id="Q921U8-2"/>
    <property type="protein sequence ID" value="ENSMUSP00000133155.2"/>
    <property type="gene ID" value="ENSMUSG00000020439.19"/>
</dbReference>
<dbReference type="GeneID" id="29856"/>
<dbReference type="KEGG" id="mmu:29856"/>
<dbReference type="UCSC" id="uc007htf.2">
    <molecule id="Q921U8-2"/>
    <property type="organism name" value="mouse"/>
</dbReference>
<dbReference type="UCSC" id="uc007hti.2">
    <molecule id="Q921U8-1"/>
    <property type="organism name" value="mouse"/>
</dbReference>
<dbReference type="AGR" id="MGI:1354727"/>
<dbReference type="CTD" id="6525"/>
<dbReference type="MGI" id="MGI:1354727">
    <property type="gene designation" value="Smtn"/>
</dbReference>
<dbReference type="VEuPathDB" id="HostDB:ENSMUSG00000020439"/>
<dbReference type="eggNOG" id="KOG4678">
    <property type="taxonomic scope" value="Eukaryota"/>
</dbReference>
<dbReference type="GeneTree" id="ENSGT00940000161655"/>
<dbReference type="HOGENOM" id="CLU_014660_0_0_1"/>
<dbReference type="InParanoid" id="Q921U8"/>
<dbReference type="OMA" id="KTPYPGF"/>
<dbReference type="TreeFam" id="TF316716"/>
<dbReference type="BioGRID-ORCS" id="29856">
    <property type="hits" value="4 hits in 76 CRISPR screens"/>
</dbReference>
<dbReference type="ChiTaRS" id="Smtn">
    <property type="organism name" value="mouse"/>
</dbReference>
<dbReference type="PRO" id="PR:Q921U8"/>
<dbReference type="Proteomes" id="UP000000589">
    <property type="component" value="Chromosome 11"/>
</dbReference>
<dbReference type="RNAct" id="Q921U8">
    <property type="molecule type" value="protein"/>
</dbReference>
<dbReference type="Bgee" id="ENSMUSG00000020439">
    <property type="expression patterns" value="Expressed in aorta tunica media and 170 other cell types or tissues"/>
</dbReference>
<dbReference type="ExpressionAtlas" id="Q921U8">
    <property type="expression patterns" value="baseline and differential"/>
</dbReference>
<dbReference type="GO" id="GO:0005737">
    <property type="term" value="C:cytoplasm"/>
    <property type="evidence" value="ECO:0007669"/>
    <property type="project" value="UniProtKB-KW"/>
</dbReference>
<dbReference type="GO" id="GO:0005856">
    <property type="term" value="C:cytoskeleton"/>
    <property type="evidence" value="ECO:0007669"/>
    <property type="project" value="UniProtKB-SubCell"/>
</dbReference>
<dbReference type="GO" id="GO:0003779">
    <property type="term" value="F:actin binding"/>
    <property type="evidence" value="ECO:0000304"/>
    <property type="project" value="MGI"/>
</dbReference>
<dbReference type="GO" id="GO:0003085">
    <property type="term" value="P:negative regulation of systemic arterial blood pressure"/>
    <property type="evidence" value="ECO:0000315"/>
    <property type="project" value="MGI"/>
</dbReference>
<dbReference type="GO" id="GO:0060452">
    <property type="term" value="P:positive regulation of cardiac muscle contraction"/>
    <property type="evidence" value="ECO:0000315"/>
    <property type="project" value="MGI"/>
</dbReference>
<dbReference type="CDD" id="cd21258">
    <property type="entry name" value="CH_SMTNA"/>
    <property type="match status" value="1"/>
</dbReference>
<dbReference type="FunFam" id="1.10.418.10:FF:000009">
    <property type="entry name" value="smoothelin isoform X2"/>
    <property type="match status" value="1"/>
</dbReference>
<dbReference type="Gene3D" id="1.10.418.10">
    <property type="entry name" value="Calponin-like domain"/>
    <property type="match status" value="1"/>
</dbReference>
<dbReference type="InterPro" id="IPR001715">
    <property type="entry name" value="CH_dom"/>
</dbReference>
<dbReference type="InterPro" id="IPR036872">
    <property type="entry name" value="CH_dom_sf"/>
</dbReference>
<dbReference type="InterPro" id="IPR050540">
    <property type="entry name" value="F-actin_Monoox_Mical"/>
</dbReference>
<dbReference type="InterPro" id="IPR022189">
    <property type="entry name" value="SMTN"/>
</dbReference>
<dbReference type="PANTHER" id="PTHR23167">
    <property type="entry name" value="CALPONIN HOMOLOGY DOMAIN-CONTAINING PROTEIN DDB_G0272472-RELATED"/>
    <property type="match status" value="1"/>
</dbReference>
<dbReference type="PANTHER" id="PTHR23167:SF52">
    <property type="entry name" value="SMOOTHELIN"/>
    <property type="match status" value="1"/>
</dbReference>
<dbReference type="Pfam" id="PF00307">
    <property type="entry name" value="CH"/>
    <property type="match status" value="1"/>
</dbReference>
<dbReference type="Pfam" id="PF12510">
    <property type="entry name" value="Smoothelin"/>
    <property type="match status" value="3"/>
</dbReference>
<dbReference type="SMART" id="SM00033">
    <property type="entry name" value="CH"/>
    <property type="match status" value="1"/>
</dbReference>
<dbReference type="SUPFAM" id="SSF47576">
    <property type="entry name" value="Calponin-homology domain, CH-domain"/>
    <property type="match status" value="1"/>
</dbReference>
<dbReference type="PROSITE" id="PS50021">
    <property type="entry name" value="CH"/>
    <property type="match status" value="1"/>
</dbReference>
<protein>
    <recommendedName>
        <fullName>Smoothelin</fullName>
    </recommendedName>
</protein>
<sequence>MADEALAGLDEGALRKLLEVTADLAERRRIRSAIRELQRQELEREEEALASKRFRAERQDNKENWLHSQQREAEQQAALARLAGRLESMNDVEELTTLLRSAGEYEERKLIRAAIRRVRAQEIKAATLAGRLCSRLPSSGPREDSRRQAAHTLDPGKVPEPEQQEQQTEVLEPTPTPEDTSQDVTTVTLLLRAPPGGRPSSPASPHNSPTSASPEPLLEPAGAQCPAVEAPVSSEPLPHPSEAPSPEPPMSPVPSSSRGRVISKPLPGPTEPSDTLDSIRGFSNTKRADPSETKSCQRSLSVLSPRQPTPNREPTSLAGPSQFRRVGSVRDRVQKFTSDSPVVARLQDGPPRTALASPTPTRLPGPSLISTTPASSSSSNSSSPSPSDTSSHKKQRELAHSLAELQSCPQEEGPGGRGLALRSLENRAGGPKPCSEEPSTPPPVAVGTGEPGGSMKTTFTIEIKDGRGQASTGRVLLPTGNQRAELTLGLRAPPTLLSTSSGGKNTITHISNPGTVTRLGSVTHVTTFSHASPGNRGGCNFKMEPDPAEPPSTTVEAANGAEQARVDKGPEGRSPLSAEELTAIEDEGVLDKMLDQTTNFEERKLIRAALRELRQRKRDQRDKERERRLREARARPGESRSNVATETTTRHSQRAADGSTVGTVTKTERLVHSNDGTQTARTTTVESSFMRRLENGSSSSSTTTTTVQTKSFSSSSSSSSSKKMGSIFDREDQTSSRPGSLAALERRQAEKKKELMKAQSLPKTSASQARKAMIEKLEKEGSAGGPGTPRTAVQRSTSFGVPNANSIKQMLLDWCRAKTRGYEHVDIQNFSSSWSDGMAFCALVHNFFPEAFDYGQLSPQNRRQNFEMAFSSAEMLVDCVPLVEVEDMMIMGKKPDPKCVFTYVQSLYNHLRRHELRLRGKNV</sequence>
<proteinExistence type="evidence at protein level"/>
<evidence type="ECO:0000250" key="1"/>
<evidence type="ECO:0000250" key="2">
    <source>
        <dbReference type="UniProtKB" id="P53814"/>
    </source>
</evidence>
<evidence type="ECO:0000255" key="3"/>
<evidence type="ECO:0000255" key="4">
    <source>
        <dbReference type="PROSITE-ProRule" id="PRU00044"/>
    </source>
</evidence>
<evidence type="ECO:0000256" key="5">
    <source>
        <dbReference type="SAM" id="MobiDB-lite"/>
    </source>
</evidence>
<evidence type="ECO:0000303" key="6">
    <source>
    </source>
</evidence>
<evidence type="ECO:0000303" key="7">
    <source>
    </source>
</evidence>
<evidence type="ECO:0000303" key="8">
    <source>
    </source>
</evidence>
<evidence type="ECO:0000305" key="9"/>
<evidence type="ECO:0007744" key="10">
    <source>
    </source>
</evidence>
<reference key="1">
    <citation type="journal article" date="2000" name="Cytogenet. Cell Genet.">
        <title>Structure and chromosome location of Smtn, the mouse smoothelin gene.</title>
        <authorList>
            <person name="Rensen S."/>
            <person name="Merkx G."/>
            <person name="Doevendans P."/>
            <person name="Geurts Van Kessel A."/>
            <person name="van Eys G.J.J.M."/>
        </authorList>
    </citation>
    <scope>NUCLEOTIDE SEQUENCE [GENOMIC DNA]</scope>
    <scope>ALTERNATIVE SPLICING</scope>
    <source>
        <strain>L129</strain>
    </source>
</reference>
<reference key="2">
    <citation type="journal article" date="1999" name="J. Mol. Med.">
        <title>A novel isoform of the smooth muscle cell differentiation marker smoothelin.</title>
        <authorList>
            <person name="Kraemer J."/>
            <person name="Aguirre-Arteta A.M."/>
            <person name="Thiel C."/>
            <person name="Gross M.C."/>
            <person name="Dietz R."/>
            <person name="Cardoso M.C."/>
            <person name="Leonhardt H."/>
        </authorList>
    </citation>
    <scope>NUCLEOTIDE SEQUENCE [MRNA] (ISOFORMS L1 AND L2)</scope>
    <source>
        <strain>129</strain>
        <tissue>Heart</tissue>
    </source>
</reference>
<reference key="3">
    <citation type="submission" date="2000-04" db="EMBL/GenBank/DDBJ databases">
        <title>Mouse smoothelin gene structure and its splicing variants.</title>
        <authorList>
            <person name="Kraemer J."/>
            <person name="Cardoso M.C."/>
            <person name="Gross C.M."/>
            <person name="Dietz R."/>
            <person name="Leonhardt H."/>
        </authorList>
    </citation>
    <scope>NUCLEOTIDE SEQUENCE [GENOMIC DNA]</scope>
    <scope>ALTERNATIVE SPLICING</scope>
    <source>
        <strain>129</strain>
    </source>
</reference>
<reference key="4">
    <citation type="journal article" date="2005" name="Science">
        <title>The transcriptional landscape of the mammalian genome.</title>
        <authorList>
            <person name="Carninci P."/>
            <person name="Kasukawa T."/>
            <person name="Katayama S."/>
            <person name="Gough J."/>
            <person name="Frith M.C."/>
            <person name="Maeda N."/>
            <person name="Oyama R."/>
            <person name="Ravasi T."/>
            <person name="Lenhard B."/>
            <person name="Wells C."/>
            <person name="Kodzius R."/>
            <person name="Shimokawa K."/>
            <person name="Bajic V.B."/>
            <person name="Brenner S.E."/>
            <person name="Batalov S."/>
            <person name="Forrest A.R."/>
            <person name="Zavolan M."/>
            <person name="Davis M.J."/>
            <person name="Wilming L.G."/>
            <person name="Aidinis V."/>
            <person name="Allen J.E."/>
            <person name="Ambesi-Impiombato A."/>
            <person name="Apweiler R."/>
            <person name="Aturaliya R.N."/>
            <person name="Bailey T.L."/>
            <person name="Bansal M."/>
            <person name="Baxter L."/>
            <person name="Beisel K.W."/>
            <person name="Bersano T."/>
            <person name="Bono H."/>
            <person name="Chalk A.M."/>
            <person name="Chiu K.P."/>
            <person name="Choudhary V."/>
            <person name="Christoffels A."/>
            <person name="Clutterbuck D.R."/>
            <person name="Crowe M.L."/>
            <person name="Dalla E."/>
            <person name="Dalrymple B.P."/>
            <person name="de Bono B."/>
            <person name="Della Gatta G."/>
            <person name="di Bernardo D."/>
            <person name="Down T."/>
            <person name="Engstrom P."/>
            <person name="Fagiolini M."/>
            <person name="Faulkner G."/>
            <person name="Fletcher C.F."/>
            <person name="Fukushima T."/>
            <person name="Furuno M."/>
            <person name="Futaki S."/>
            <person name="Gariboldi M."/>
            <person name="Georgii-Hemming P."/>
            <person name="Gingeras T.R."/>
            <person name="Gojobori T."/>
            <person name="Green R.E."/>
            <person name="Gustincich S."/>
            <person name="Harbers M."/>
            <person name="Hayashi Y."/>
            <person name="Hensch T.K."/>
            <person name="Hirokawa N."/>
            <person name="Hill D."/>
            <person name="Huminiecki L."/>
            <person name="Iacono M."/>
            <person name="Ikeo K."/>
            <person name="Iwama A."/>
            <person name="Ishikawa T."/>
            <person name="Jakt M."/>
            <person name="Kanapin A."/>
            <person name="Katoh M."/>
            <person name="Kawasawa Y."/>
            <person name="Kelso J."/>
            <person name="Kitamura H."/>
            <person name="Kitano H."/>
            <person name="Kollias G."/>
            <person name="Krishnan S.P."/>
            <person name="Kruger A."/>
            <person name="Kummerfeld S.K."/>
            <person name="Kurochkin I.V."/>
            <person name="Lareau L.F."/>
            <person name="Lazarevic D."/>
            <person name="Lipovich L."/>
            <person name="Liu J."/>
            <person name="Liuni S."/>
            <person name="McWilliam S."/>
            <person name="Madan Babu M."/>
            <person name="Madera M."/>
            <person name="Marchionni L."/>
            <person name="Matsuda H."/>
            <person name="Matsuzawa S."/>
            <person name="Miki H."/>
            <person name="Mignone F."/>
            <person name="Miyake S."/>
            <person name="Morris K."/>
            <person name="Mottagui-Tabar S."/>
            <person name="Mulder N."/>
            <person name="Nakano N."/>
            <person name="Nakauchi H."/>
            <person name="Ng P."/>
            <person name="Nilsson R."/>
            <person name="Nishiguchi S."/>
            <person name="Nishikawa S."/>
            <person name="Nori F."/>
            <person name="Ohara O."/>
            <person name="Okazaki Y."/>
            <person name="Orlando V."/>
            <person name="Pang K.C."/>
            <person name="Pavan W.J."/>
            <person name="Pavesi G."/>
            <person name="Pesole G."/>
            <person name="Petrovsky N."/>
            <person name="Piazza S."/>
            <person name="Reed J."/>
            <person name="Reid J.F."/>
            <person name="Ring B.Z."/>
            <person name="Ringwald M."/>
            <person name="Rost B."/>
            <person name="Ruan Y."/>
            <person name="Salzberg S.L."/>
            <person name="Sandelin A."/>
            <person name="Schneider C."/>
            <person name="Schoenbach C."/>
            <person name="Sekiguchi K."/>
            <person name="Semple C.A."/>
            <person name="Seno S."/>
            <person name="Sessa L."/>
            <person name="Sheng Y."/>
            <person name="Shibata Y."/>
            <person name="Shimada H."/>
            <person name="Shimada K."/>
            <person name="Silva D."/>
            <person name="Sinclair B."/>
            <person name="Sperling S."/>
            <person name="Stupka E."/>
            <person name="Sugiura K."/>
            <person name="Sultana R."/>
            <person name="Takenaka Y."/>
            <person name="Taki K."/>
            <person name="Tammoja K."/>
            <person name="Tan S.L."/>
            <person name="Tang S."/>
            <person name="Taylor M.S."/>
            <person name="Tegner J."/>
            <person name="Teichmann S.A."/>
            <person name="Ueda H.R."/>
            <person name="van Nimwegen E."/>
            <person name="Verardo R."/>
            <person name="Wei C.L."/>
            <person name="Yagi K."/>
            <person name="Yamanishi H."/>
            <person name="Zabarovsky E."/>
            <person name="Zhu S."/>
            <person name="Zimmer A."/>
            <person name="Hide W."/>
            <person name="Bult C."/>
            <person name="Grimmond S.M."/>
            <person name="Teasdale R.D."/>
            <person name="Liu E.T."/>
            <person name="Brusic V."/>
            <person name="Quackenbush J."/>
            <person name="Wahlestedt C."/>
            <person name="Mattick J.S."/>
            <person name="Hume D.A."/>
            <person name="Kai C."/>
            <person name="Sasaki D."/>
            <person name="Tomaru Y."/>
            <person name="Fukuda S."/>
            <person name="Kanamori-Katayama M."/>
            <person name="Suzuki M."/>
            <person name="Aoki J."/>
            <person name="Arakawa T."/>
            <person name="Iida J."/>
            <person name="Imamura K."/>
            <person name="Itoh M."/>
            <person name="Kato T."/>
            <person name="Kawaji H."/>
            <person name="Kawagashira N."/>
            <person name="Kawashima T."/>
            <person name="Kojima M."/>
            <person name="Kondo S."/>
            <person name="Konno H."/>
            <person name="Nakano K."/>
            <person name="Ninomiya N."/>
            <person name="Nishio T."/>
            <person name="Okada M."/>
            <person name="Plessy C."/>
            <person name="Shibata K."/>
            <person name="Shiraki T."/>
            <person name="Suzuki S."/>
            <person name="Tagami M."/>
            <person name="Waki K."/>
            <person name="Watahiki A."/>
            <person name="Okamura-Oho Y."/>
            <person name="Suzuki H."/>
            <person name="Kawai J."/>
            <person name="Hayashizaki Y."/>
        </authorList>
    </citation>
    <scope>NUCLEOTIDE SEQUENCE [LARGE SCALE MRNA] (ISOFORM L2)</scope>
    <source>
        <strain>C57BL/6J</strain>
        <strain>NOD</strain>
        <tissue>Thymus</tissue>
    </source>
</reference>
<reference key="5">
    <citation type="journal article" date="2004" name="Genome Res.">
        <title>The status, quality, and expansion of the NIH full-length cDNA project: the Mammalian Gene Collection (MGC).</title>
        <authorList>
            <consortium name="The MGC Project Team"/>
        </authorList>
    </citation>
    <scope>NUCLEOTIDE SEQUENCE [LARGE SCALE MRNA] (ISOFORM L2)</scope>
    <source>
        <strain>C57BL/6J</strain>
        <strain>FVB/N</strain>
        <tissue>Blastocyst</tissue>
        <tissue>Embryo</tissue>
        <tissue>Mammary tumor</tissue>
    </source>
</reference>
<reference key="6">
    <citation type="journal article" date="2010" name="Cell">
        <title>A tissue-specific atlas of mouse protein phosphorylation and expression.</title>
        <authorList>
            <person name="Huttlin E.L."/>
            <person name="Jedrychowski M.P."/>
            <person name="Elias J.E."/>
            <person name="Goswami T."/>
            <person name="Rad R."/>
            <person name="Beausoleil S.A."/>
            <person name="Villen J."/>
            <person name="Haas W."/>
            <person name="Sowa M.E."/>
            <person name="Gygi S.P."/>
        </authorList>
    </citation>
    <scope>PHOSPHORYLATION [LARGE SCALE ANALYSIS] AT SER-641</scope>
    <scope>IDENTIFICATION BY MASS SPECTROMETRY [LARGE SCALE ANALYSIS]</scope>
    <source>
        <tissue>Heart</tissue>
        <tissue>Kidney</tissue>
    </source>
</reference>
<organism>
    <name type="scientific">Mus musculus</name>
    <name type="common">Mouse</name>
    <dbReference type="NCBI Taxonomy" id="10090"/>
    <lineage>
        <taxon>Eukaryota</taxon>
        <taxon>Metazoa</taxon>
        <taxon>Chordata</taxon>
        <taxon>Craniata</taxon>
        <taxon>Vertebrata</taxon>
        <taxon>Euteleostomi</taxon>
        <taxon>Mammalia</taxon>
        <taxon>Eutheria</taxon>
        <taxon>Euarchontoglires</taxon>
        <taxon>Glires</taxon>
        <taxon>Rodentia</taxon>
        <taxon>Myomorpha</taxon>
        <taxon>Muroidea</taxon>
        <taxon>Muridae</taxon>
        <taxon>Murinae</taxon>
        <taxon>Mus</taxon>
        <taxon>Mus</taxon>
    </lineage>
</organism>
<comment type="function">
    <text evidence="1">Structural protein of the cytoskeleton.</text>
</comment>
<comment type="subcellular location">
    <subcellularLocation>
        <location evidence="1">Cytoplasm</location>
        <location evidence="1">Cytoskeleton</location>
    </subcellularLocation>
    <text evidence="1">Exhibits a filamentous organization.</text>
</comment>
<comment type="alternative products">
    <event type="alternative splicing"/>
    <isoform>
        <id>Q921U8-1</id>
        <name>L1</name>
        <name>B</name>
        <sequence type="displayed"/>
    </isoform>
    <isoform>
        <id>Q921U8-2</id>
        <name>L2</name>
        <sequence type="described" ref="VSP_031244"/>
    </isoform>
    <isoform>
        <id>Q921U8-3</id>
        <name>S1</name>
        <name>A</name>
        <sequence type="described" ref="VSP_031243"/>
    </isoform>
    <isoform>
        <id>Q921U8-4</id>
        <name>S2</name>
        <sequence type="described" ref="VSP_031243 VSP_031244"/>
    </isoform>
</comment>
<comment type="similarity">
    <text evidence="9">Belongs to the smoothelin family.</text>
</comment>
<name>SMTN_MOUSE</name>
<accession>Q921U8</accession>
<accession>Q3TCV2</accession>
<accession>Q6NSW1</accession>
<accession>Q8CD93</accession>
<accession>Q9JHG8</accession>
<accession>Q9JLU7</accession>
<accession>Q9R0D0</accession>
<accession>Q9R253</accession>
<accession>Q9Z0Q2</accession>
<feature type="initiator methionine" description="Removed" evidence="2">
    <location>
        <position position="1"/>
    </location>
</feature>
<feature type="chain" id="PRO_0000318593" description="Smoothelin">
    <location>
        <begin position="2"/>
        <end position="923"/>
    </location>
</feature>
<feature type="domain" description="Calponin-homology (CH)" evidence="4">
    <location>
        <begin position="805"/>
        <end position="912"/>
    </location>
</feature>
<feature type="region of interest" description="Disordered" evidence="5">
    <location>
        <begin position="134"/>
        <end position="456"/>
    </location>
</feature>
<feature type="region of interest" description="Disordered" evidence="5">
    <location>
        <begin position="542"/>
        <end position="578"/>
    </location>
</feature>
<feature type="region of interest" description="Disordered" evidence="5">
    <location>
        <begin position="615"/>
        <end position="772"/>
    </location>
</feature>
<feature type="coiled-coil region" evidence="3">
    <location>
        <begin position="24"/>
        <end position="89"/>
    </location>
</feature>
<feature type="coiled-coil region" evidence="3">
    <location>
        <begin position="601"/>
        <end position="628"/>
    </location>
</feature>
<feature type="compositionally biased region" description="Low complexity" evidence="5">
    <location>
        <begin position="164"/>
        <end position="179"/>
    </location>
</feature>
<feature type="compositionally biased region" description="Low complexity" evidence="5">
    <location>
        <begin position="192"/>
        <end position="205"/>
    </location>
</feature>
<feature type="compositionally biased region" description="Pro residues" evidence="5">
    <location>
        <begin position="237"/>
        <end position="252"/>
    </location>
</feature>
<feature type="compositionally biased region" description="Polar residues" evidence="5">
    <location>
        <begin position="272"/>
        <end position="285"/>
    </location>
</feature>
<feature type="compositionally biased region" description="Polar residues" evidence="5">
    <location>
        <begin position="293"/>
        <end position="314"/>
    </location>
</feature>
<feature type="compositionally biased region" description="Low complexity" evidence="5">
    <location>
        <begin position="366"/>
        <end position="389"/>
    </location>
</feature>
<feature type="compositionally biased region" description="Basic and acidic residues" evidence="5">
    <location>
        <begin position="615"/>
        <end position="638"/>
    </location>
</feature>
<feature type="compositionally biased region" description="Polar residues" evidence="5">
    <location>
        <begin position="674"/>
        <end position="687"/>
    </location>
</feature>
<feature type="compositionally biased region" description="Low complexity" evidence="5">
    <location>
        <begin position="697"/>
        <end position="721"/>
    </location>
</feature>
<feature type="compositionally biased region" description="Basic and acidic residues" evidence="5">
    <location>
        <begin position="744"/>
        <end position="756"/>
    </location>
</feature>
<feature type="modified residue" description="N-acetylalanine" evidence="2">
    <location>
        <position position="2"/>
    </location>
</feature>
<feature type="modified residue" description="Phosphoserine" evidence="2">
    <location>
        <position position="299"/>
    </location>
</feature>
<feature type="modified residue" description="Phosphoserine" evidence="2">
    <location>
        <position position="301"/>
    </location>
</feature>
<feature type="modified residue" description="Phosphoserine" evidence="2">
    <location>
        <position position="304"/>
    </location>
</feature>
<feature type="modified residue" description="Phosphoserine" evidence="2">
    <location>
        <position position="340"/>
    </location>
</feature>
<feature type="modified residue" description="Phosphothreonine" evidence="2">
    <location>
        <position position="359"/>
    </location>
</feature>
<feature type="modified residue" description="Phosphothreonine" evidence="2">
    <location>
        <position position="372"/>
    </location>
</feature>
<feature type="modified residue" description="Phosphoserine" evidence="2">
    <location>
        <position position="501"/>
    </location>
</feature>
<feature type="modified residue" description="Phosphoserine" evidence="2">
    <location>
        <position position="521"/>
    </location>
</feature>
<feature type="modified residue" description="Phosphoserine" evidence="2">
    <location>
        <position position="574"/>
    </location>
</feature>
<feature type="modified residue" description="Phosphoserine" evidence="10">
    <location>
        <position position="641"/>
    </location>
</feature>
<feature type="modified residue" description="Phosphoserine" evidence="2">
    <location>
        <position position="735"/>
    </location>
</feature>
<feature type="modified residue" description="Phosphoserine" evidence="2">
    <location>
        <position position="798"/>
    </location>
</feature>
<feature type="splice variant" id="VSP_031243" description="In isoform S1 and isoform S2." evidence="9">
    <location>
        <begin position="1"/>
        <end position="454"/>
    </location>
</feature>
<feature type="splice variant" id="VSP_031244" description="In isoform L2 and isoform S2." evidence="6 7 8">
    <original>MLVDCVPLVEVEDMMIMGKKPDPKCVFTYVQSLYNHLRRHELRLRGKNV</original>
    <variation>THADCPQLLDTEDMVRLREPDWKCVYTYIQEFYRCLVQKGLVKTKKS</variation>
    <location>
        <begin position="875"/>
        <end position="923"/>
    </location>
</feature>
<feature type="sequence conflict" description="In Ref. 1; AAD29628, 2; AAF01480/CAA09076 and 3; AAF25577/AAF25578." evidence="9" ref="1 2 3">
    <original>P</original>
    <variation>S</variation>
    <location>
        <position position="173"/>
    </location>
</feature>
<feature type="sequence conflict" description="In Ref. 5; AAH69839/AAH69836/AAH66192." evidence="9" ref="5">
    <location>
        <position position="379"/>
    </location>
</feature>
<feature type="sequence conflict" description="In Ref. 4; BAE41853." evidence="9" ref="4">
    <original>P</original>
    <variation>Q</variation>
    <location>
        <position position="441"/>
    </location>
</feature>
<feature type="sequence conflict" description="In Ref. 4; BAC27188." evidence="9" ref="4">
    <original>T</original>
    <variation>N</variation>
    <location>
        <position position="448"/>
    </location>
</feature>
<feature type="sequence conflict" description="In Ref. 5; AAH69839/AAH69836/AAH66192." evidence="9" ref="5">
    <original>E</original>
    <variation>G</variation>
    <location>
        <position position="450"/>
    </location>
</feature>
<feature type="sequence conflict" description="In Ref. 1; AAD29628/AAF67392, 2; AAF01480/CAA09076 and 3; AAF25577/AAF25578/AAF25579/AAF25580." evidence="9" ref="1 2 3">
    <original>S</original>
    <variation>N</variation>
    <location>
        <position position="711"/>
    </location>
</feature>
<feature type="sequence conflict" description="In Ref. 5; AAH69839/AAH69836/AAH66192." evidence="9" ref="5">
    <original>M</original>
    <variation>V</variation>
    <location>
        <position position="756"/>
    </location>
</feature>
<feature type="sequence conflict" description="In Ref. 1; AAD29628/AAF67392, 2; AAF01480/CAA09076 and 3; AAF25577/AAF25578/AAF25579/AAF25580." evidence="9" ref="1 2 3">
    <original>G</original>
    <variation>R</variation>
    <location>
        <position position="837"/>
    </location>
</feature>
<feature type="modified residue" description="Phosphothreonine" evidence="1">
    <location sequence="Q921U8-2">
        <position position="372"/>
    </location>
</feature>